<organism>
    <name type="scientific">Pseudomonas putida (strain ATCC 47054 / DSM 6125 / CFBP 8728 / NCIMB 11950 / KT2440)</name>
    <dbReference type="NCBI Taxonomy" id="160488"/>
    <lineage>
        <taxon>Bacteria</taxon>
        <taxon>Pseudomonadati</taxon>
        <taxon>Pseudomonadota</taxon>
        <taxon>Gammaproteobacteria</taxon>
        <taxon>Pseudomonadales</taxon>
        <taxon>Pseudomonadaceae</taxon>
        <taxon>Pseudomonas</taxon>
    </lineage>
</organism>
<protein>
    <recommendedName>
        <fullName evidence="1">Probable malate:quinone oxidoreductase 2</fullName>
        <ecNumber evidence="1">1.1.5.4</ecNumber>
    </recommendedName>
    <alternativeName>
        <fullName evidence="1">MQO 2</fullName>
    </alternativeName>
    <alternativeName>
        <fullName evidence="1">Malate dehydrogenase [quinone] 2</fullName>
    </alternativeName>
</protein>
<dbReference type="EC" id="1.1.5.4" evidence="1"/>
<dbReference type="EMBL" id="AE015451">
    <property type="protein sequence ID" value="AAN66875.1"/>
    <property type="molecule type" value="Genomic_DNA"/>
</dbReference>
<dbReference type="RefSeq" id="NP_743411.3">
    <property type="nucleotide sequence ID" value="NC_002947.4"/>
</dbReference>
<dbReference type="SMR" id="Q88NF9"/>
<dbReference type="STRING" id="160488.PP_1251"/>
<dbReference type="PaxDb" id="160488-PP_1251"/>
<dbReference type="KEGG" id="ppu:PP_1251"/>
<dbReference type="PATRIC" id="fig|160488.4.peg.1327"/>
<dbReference type="eggNOG" id="COG0579">
    <property type="taxonomic scope" value="Bacteria"/>
</dbReference>
<dbReference type="HOGENOM" id="CLU_028151_0_0_6"/>
<dbReference type="OrthoDB" id="9763983at2"/>
<dbReference type="PhylomeDB" id="Q88NF9"/>
<dbReference type="BioCyc" id="PPUT160488:G1G01-1338-MONOMER"/>
<dbReference type="UniPathway" id="UPA00223">
    <property type="reaction ID" value="UER01008"/>
</dbReference>
<dbReference type="Proteomes" id="UP000000556">
    <property type="component" value="Chromosome"/>
</dbReference>
<dbReference type="GO" id="GO:0047545">
    <property type="term" value="F:2-hydroxyglutarate dehydrogenase activity"/>
    <property type="evidence" value="ECO:0007669"/>
    <property type="project" value="TreeGrafter"/>
</dbReference>
<dbReference type="GO" id="GO:0008924">
    <property type="term" value="F:L-malate dehydrogenase (quinone) activity"/>
    <property type="evidence" value="ECO:0007669"/>
    <property type="project" value="UniProtKB-UniRule"/>
</dbReference>
<dbReference type="GO" id="GO:0006099">
    <property type="term" value="P:tricarboxylic acid cycle"/>
    <property type="evidence" value="ECO:0007669"/>
    <property type="project" value="UniProtKB-UniRule"/>
</dbReference>
<dbReference type="Gene3D" id="3.30.9.10">
    <property type="entry name" value="D-Amino Acid Oxidase, subunit A, domain 2"/>
    <property type="match status" value="1"/>
</dbReference>
<dbReference type="Gene3D" id="3.50.50.60">
    <property type="entry name" value="FAD/NAD(P)-binding domain"/>
    <property type="match status" value="1"/>
</dbReference>
<dbReference type="HAMAP" id="MF_00212">
    <property type="entry name" value="MQO"/>
    <property type="match status" value="1"/>
</dbReference>
<dbReference type="InterPro" id="IPR036188">
    <property type="entry name" value="FAD/NAD-bd_sf"/>
</dbReference>
<dbReference type="InterPro" id="IPR006231">
    <property type="entry name" value="MQO"/>
</dbReference>
<dbReference type="NCBIfam" id="TIGR01320">
    <property type="entry name" value="mal_quin_oxido"/>
    <property type="match status" value="1"/>
</dbReference>
<dbReference type="NCBIfam" id="NF003603">
    <property type="entry name" value="PRK05257.1-1"/>
    <property type="match status" value="1"/>
</dbReference>
<dbReference type="NCBIfam" id="NF003605">
    <property type="entry name" value="PRK05257.1-4"/>
    <property type="match status" value="1"/>
</dbReference>
<dbReference type="NCBIfam" id="NF003606">
    <property type="entry name" value="PRK05257.2-1"/>
    <property type="match status" value="1"/>
</dbReference>
<dbReference type="NCBIfam" id="NF003611">
    <property type="entry name" value="PRK05257.3-2"/>
    <property type="match status" value="1"/>
</dbReference>
<dbReference type="NCBIfam" id="NF009875">
    <property type="entry name" value="PRK13339.1"/>
    <property type="match status" value="1"/>
</dbReference>
<dbReference type="PANTHER" id="PTHR43104">
    <property type="entry name" value="L-2-HYDROXYGLUTARATE DEHYDROGENASE, MITOCHONDRIAL"/>
    <property type="match status" value="1"/>
</dbReference>
<dbReference type="PANTHER" id="PTHR43104:SF2">
    <property type="entry name" value="L-2-HYDROXYGLUTARATE DEHYDROGENASE, MITOCHONDRIAL"/>
    <property type="match status" value="1"/>
</dbReference>
<dbReference type="Pfam" id="PF06039">
    <property type="entry name" value="Mqo"/>
    <property type="match status" value="1"/>
</dbReference>
<dbReference type="SUPFAM" id="SSF51905">
    <property type="entry name" value="FAD/NAD(P)-binding domain"/>
    <property type="match status" value="1"/>
</dbReference>
<accession>Q88NF9</accession>
<comment type="catalytic activity">
    <reaction evidence="1">
        <text>(S)-malate + a quinone = a quinol + oxaloacetate</text>
        <dbReference type="Rhea" id="RHEA:46012"/>
        <dbReference type="ChEBI" id="CHEBI:15589"/>
        <dbReference type="ChEBI" id="CHEBI:16452"/>
        <dbReference type="ChEBI" id="CHEBI:24646"/>
        <dbReference type="ChEBI" id="CHEBI:132124"/>
        <dbReference type="EC" id="1.1.5.4"/>
    </reaction>
</comment>
<comment type="cofactor">
    <cofactor evidence="1">
        <name>FAD</name>
        <dbReference type="ChEBI" id="CHEBI:57692"/>
    </cofactor>
</comment>
<comment type="pathway">
    <text evidence="1">Carbohydrate metabolism; tricarboxylic acid cycle; oxaloacetate from (S)-malate (quinone route): step 1/1.</text>
</comment>
<comment type="similarity">
    <text evidence="1">Belongs to the MQO family.</text>
</comment>
<name>MQO2_PSEPK</name>
<proteinExistence type="inferred from homology"/>
<keyword id="KW-0274">FAD</keyword>
<keyword id="KW-0285">Flavoprotein</keyword>
<keyword id="KW-0560">Oxidoreductase</keyword>
<keyword id="KW-1185">Reference proteome</keyword>
<keyword id="KW-0816">Tricarboxylic acid cycle</keyword>
<reference key="1">
    <citation type="journal article" date="2002" name="Environ. Microbiol.">
        <title>Complete genome sequence and comparative analysis of the metabolically versatile Pseudomonas putida KT2440.</title>
        <authorList>
            <person name="Nelson K.E."/>
            <person name="Weinel C."/>
            <person name="Paulsen I.T."/>
            <person name="Dodson R.J."/>
            <person name="Hilbert H."/>
            <person name="Martins dos Santos V.A.P."/>
            <person name="Fouts D.E."/>
            <person name="Gill S.R."/>
            <person name="Pop M."/>
            <person name="Holmes M."/>
            <person name="Brinkac L.M."/>
            <person name="Beanan M.J."/>
            <person name="DeBoy R.T."/>
            <person name="Daugherty S.C."/>
            <person name="Kolonay J.F."/>
            <person name="Madupu R."/>
            <person name="Nelson W.C."/>
            <person name="White O."/>
            <person name="Peterson J.D."/>
            <person name="Khouri H.M."/>
            <person name="Hance I."/>
            <person name="Chris Lee P."/>
            <person name="Holtzapple E.K."/>
            <person name="Scanlan D."/>
            <person name="Tran K."/>
            <person name="Moazzez A."/>
            <person name="Utterback T.R."/>
            <person name="Rizzo M."/>
            <person name="Lee K."/>
            <person name="Kosack D."/>
            <person name="Moestl D."/>
            <person name="Wedler H."/>
            <person name="Lauber J."/>
            <person name="Stjepandic D."/>
            <person name="Hoheisel J."/>
            <person name="Straetz M."/>
            <person name="Heim S."/>
            <person name="Kiewitz C."/>
            <person name="Eisen J.A."/>
            <person name="Timmis K.N."/>
            <person name="Duesterhoeft A."/>
            <person name="Tuemmler B."/>
            <person name="Fraser C.M."/>
        </authorList>
    </citation>
    <scope>NUCLEOTIDE SEQUENCE [LARGE SCALE GENOMIC DNA]</scope>
    <source>
        <strain>ATCC 47054 / DSM 6125 / CFBP 8728 / NCIMB 11950 / KT2440</strain>
    </source>
</reference>
<gene>
    <name evidence="1" type="primary">mqo2</name>
    <name type="synonym">mqo-2</name>
    <name type="ordered locus">PP_1251</name>
</gene>
<sequence>MQAHAAETKKVDVLLVGGGIMSSTLAVWLHELEPSWSMEMVERLDGVAEESSNGWNNAGTGHSALAELNYTPEDKDGNVNISKAIEINEAFQISRQFWSWQVRQGVLKNPHSFINTTPHMSFVWGDDNIKFLKKRYDALQASPLFRPMQYSEDHAQIAKWVPLMMEGRDPNQKLAVTWTPIGTDVNFGEITRQFVGHLQTQKGFELKLSSEVQDITRNKDGSWHVEYKNLKDGTESATDAKFLFIGAGGGALKLLQKSGIPEAKEYAGFPVGGSFLVTENPTVAMQHMAKAYGIASTGAPPMSVPHLDTRVLDGKRVILFGPFATFSTKFLKNGSYLDLLSSTTTHNVWPMTKVGIDQYPLVEYLAGQLMLSDDDRFEALRTYFPNAKKEEWRLWQAGQRVQIIKRDAEKGGVLKLGTEVVASEDRTIAGLLGASPGASTAAPIMLHVLETVFKEKVATPEWQAKIKEIVPSYGTKLNDSAAATQKEWNYTAEVLQLGKPPVIDASVEFGGAASKPVESKPENDMAL</sequence>
<evidence type="ECO:0000255" key="1">
    <source>
        <dbReference type="HAMAP-Rule" id="MF_00212"/>
    </source>
</evidence>
<feature type="chain" id="PRO_0000128733" description="Probable malate:quinone oxidoreductase 2">
    <location>
        <begin position="1"/>
        <end position="527"/>
    </location>
</feature>